<gene>
    <name type="primary">URA7</name>
    <name type="ORF">FGRAMPH1_01T25925</name>
    <name type="ORF">FGRRES_07897_M</name>
    <name type="ORF">FGSG_07897</name>
</gene>
<feature type="chain" id="PRO_0000138280" description="CTP synthase">
    <location>
        <begin position="1"/>
        <end position="580"/>
    </location>
</feature>
<feature type="domain" description="Glutamine amidotransferase type-1" evidence="1">
    <location>
        <begin position="304"/>
        <end position="559"/>
    </location>
</feature>
<feature type="active site" description="For GATase activity" evidence="1">
    <location>
        <position position="403"/>
    </location>
</feature>
<feature type="active site" description="For GATase activity" evidence="1">
    <location>
        <position position="532"/>
    </location>
</feature>
<feature type="active site" description="For GATase activity" evidence="1">
    <location>
        <position position="534"/>
    </location>
</feature>
<feature type="sequence conflict" description="In Ref. 1; BAA33767." evidence="2" ref="1">
    <original>V</original>
    <variation>A</variation>
    <location>
        <position position="239"/>
    </location>
</feature>
<name>PYRG_GIBZE</name>
<organism>
    <name type="scientific">Gibberella zeae (strain ATCC MYA-4620 / CBS 123657 / FGSC 9075 / NRRL 31084 / PH-1)</name>
    <name type="common">Wheat head blight fungus</name>
    <name type="synonym">Fusarium graminearum</name>
    <dbReference type="NCBI Taxonomy" id="229533"/>
    <lineage>
        <taxon>Eukaryota</taxon>
        <taxon>Fungi</taxon>
        <taxon>Dikarya</taxon>
        <taxon>Ascomycota</taxon>
        <taxon>Pezizomycotina</taxon>
        <taxon>Sordariomycetes</taxon>
        <taxon>Hypocreomycetidae</taxon>
        <taxon>Hypocreales</taxon>
        <taxon>Nectriaceae</taxon>
        <taxon>Fusarium</taxon>
    </lineage>
</organism>
<keyword id="KW-0067">ATP-binding</keyword>
<keyword id="KW-0315">Glutamine amidotransferase</keyword>
<keyword id="KW-0436">Ligase</keyword>
<keyword id="KW-0547">Nucleotide-binding</keyword>
<keyword id="KW-0665">Pyrimidine biosynthesis</keyword>
<keyword id="KW-1185">Reference proteome</keyword>
<accession>O74638</accession>
<accession>A0A098DSG1</accession>
<accession>A0A0E0SCX1</accession>
<accession>A0A1I9FMD5</accession>
<accession>I1RUK1</accession>
<accession>Q4I4G1</accession>
<accession>Q7LWD4</accession>
<reference key="1">
    <citation type="journal article" date="1998" name="FEBS Lett.">
        <title>The mystery of the trichothecene 3-O-acetyltransferase gene. Analysis of the region around Tri101 and characterization of its homologue from Fusarium sporotrichioides.</title>
        <authorList>
            <person name="Kimura M."/>
            <person name="Matsumoto G."/>
            <person name="Shingu Y."/>
            <person name="Yoneyama K."/>
            <person name="Yamaguchi I."/>
        </authorList>
    </citation>
    <scope>NUCLEOTIDE SEQUENCE [GENOMIC DNA]</scope>
    <source>
        <strain>F15</strain>
    </source>
</reference>
<reference key="2">
    <citation type="journal article" date="2007" name="Science">
        <title>The Fusarium graminearum genome reveals a link between localized polymorphism and pathogen specialization.</title>
        <authorList>
            <person name="Cuomo C.A."/>
            <person name="Gueldener U."/>
            <person name="Xu J.-R."/>
            <person name="Trail F."/>
            <person name="Turgeon B.G."/>
            <person name="Di Pietro A."/>
            <person name="Walton J.D."/>
            <person name="Ma L.-J."/>
            <person name="Baker S.E."/>
            <person name="Rep M."/>
            <person name="Adam G."/>
            <person name="Antoniw J."/>
            <person name="Baldwin T."/>
            <person name="Calvo S.E."/>
            <person name="Chang Y.-L."/>
            <person name="DeCaprio D."/>
            <person name="Gale L.R."/>
            <person name="Gnerre S."/>
            <person name="Goswami R.S."/>
            <person name="Hammond-Kosack K."/>
            <person name="Harris L.J."/>
            <person name="Hilburn K."/>
            <person name="Kennell J.C."/>
            <person name="Kroken S."/>
            <person name="Magnuson J.K."/>
            <person name="Mannhaupt G."/>
            <person name="Mauceli E.W."/>
            <person name="Mewes H.-W."/>
            <person name="Mitterbauer R."/>
            <person name="Muehlbauer G."/>
            <person name="Muensterkoetter M."/>
            <person name="Nelson D."/>
            <person name="O'Donnell K."/>
            <person name="Ouellet T."/>
            <person name="Qi W."/>
            <person name="Quesneville H."/>
            <person name="Roncero M.I.G."/>
            <person name="Seong K.-Y."/>
            <person name="Tetko I.V."/>
            <person name="Urban M."/>
            <person name="Waalwijk C."/>
            <person name="Ward T.J."/>
            <person name="Yao J."/>
            <person name="Birren B.W."/>
            <person name="Kistler H.C."/>
        </authorList>
    </citation>
    <scope>NUCLEOTIDE SEQUENCE [LARGE SCALE GENOMIC DNA]</scope>
    <source>
        <strain>ATCC MYA-4620 / CBS 123657 / FGSC 9075 / NRRL 31084 / PH-1</strain>
    </source>
</reference>
<reference key="3">
    <citation type="journal article" date="2010" name="Nature">
        <title>Comparative genomics reveals mobile pathogenicity chromosomes in Fusarium.</title>
        <authorList>
            <person name="Ma L.-J."/>
            <person name="van der Does H.C."/>
            <person name="Borkovich K.A."/>
            <person name="Coleman J.J."/>
            <person name="Daboussi M.-J."/>
            <person name="Di Pietro A."/>
            <person name="Dufresne M."/>
            <person name="Freitag M."/>
            <person name="Grabherr M."/>
            <person name="Henrissat B."/>
            <person name="Houterman P.M."/>
            <person name="Kang S."/>
            <person name="Shim W.-B."/>
            <person name="Woloshuk C."/>
            <person name="Xie X."/>
            <person name="Xu J.-R."/>
            <person name="Antoniw J."/>
            <person name="Baker S.E."/>
            <person name="Bluhm B.H."/>
            <person name="Breakspear A."/>
            <person name="Brown D.W."/>
            <person name="Butchko R.A.E."/>
            <person name="Chapman S."/>
            <person name="Coulson R."/>
            <person name="Coutinho P.M."/>
            <person name="Danchin E.G.J."/>
            <person name="Diener A."/>
            <person name="Gale L.R."/>
            <person name="Gardiner D.M."/>
            <person name="Goff S."/>
            <person name="Hammond-Kosack K.E."/>
            <person name="Hilburn K."/>
            <person name="Hua-Van A."/>
            <person name="Jonkers W."/>
            <person name="Kazan K."/>
            <person name="Kodira C.D."/>
            <person name="Koehrsen M."/>
            <person name="Kumar L."/>
            <person name="Lee Y.-H."/>
            <person name="Li L."/>
            <person name="Manners J.M."/>
            <person name="Miranda-Saavedra D."/>
            <person name="Mukherjee M."/>
            <person name="Park G."/>
            <person name="Park J."/>
            <person name="Park S.-Y."/>
            <person name="Proctor R.H."/>
            <person name="Regev A."/>
            <person name="Ruiz-Roldan M.C."/>
            <person name="Sain D."/>
            <person name="Sakthikumar S."/>
            <person name="Sykes S."/>
            <person name="Schwartz D.C."/>
            <person name="Turgeon B.G."/>
            <person name="Wapinski I."/>
            <person name="Yoder O."/>
            <person name="Young S."/>
            <person name="Zeng Q."/>
            <person name="Zhou S."/>
            <person name="Galagan J."/>
            <person name="Cuomo C.A."/>
            <person name="Kistler H.C."/>
            <person name="Rep M."/>
        </authorList>
    </citation>
    <scope>GENOME REANNOTATION</scope>
    <source>
        <strain>ATCC MYA-4620 / CBS 123657 / FGSC 9075 / NRRL 31084 / PH-1</strain>
    </source>
</reference>
<reference key="4">
    <citation type="journal article" date="2015" name="BMC Genomics">
        <title>The completed genome sequence of the pathogenic ascomycete fungus Fusarium graminearum.</title>
        <authorList>
            <person name="King R."/>
            <person name="Urban M."/>
            <person name="Hammond-Kosack M.C.U."/>
            <person name="Hassani-Pak K."/>
            <person name="Hammond-Kosack K.E."/>
        </authorList>
    </citation>
    <scope>NUCLEOTIDE SEQUENCE [LARGE SCALE GENOMIC DNA]</scope>
    <source>
        <strain>ATCC MYA-4620 / CBS 123657 / FGSC 9075 / NRRL 31084 / PH-1</strain>
    </source>
</reference>
<reference key="5">
    <citation type="journal article" date="1998" name="Biosci. Biotechnol. Biochem.">
        <title>Features of Tri101, the trichothecene 3-O-acetyltransferase gene, related to the self-defense mechanism in Fusarium graminearum.</title>
        <authorList>
            <person name="Kimura M."/>
            <person name="Shingu Y."/>
            <person name="Yoneyama K."/>
            <person name="Yamaguchi I."/>
        </authorList>
    </citation>
    <scope>NUCLEOTIDE SEQUENCE [GENOMIC DNA] OF 498-580</scope>
</reference>
<proteinExistence type="inferred from homology"/>
<sequence length="580" mass="63866">MKVVLVSGGVISGVGKGIIASSAGLLLKTLGLRVTAIKTDPYINTDAGLLNPLEHGECFVLDDGGETDLDLGNYERYLGIQLSRDSNITTGKIYKQVIEKERRGDYLGKTVQVVPHITDAIQDWIERVAKIPVDASGEAPDVCIIELGGTIGDLESGPFVEALSQLRHRLGRDNFLSISVSYVPIINGEEKTKPTQHAIRQVRSAGLIPDVIACRCERELDQATITKIARSCQVEDEQVIGVRNMDTIYQVPLLLEQEGLLKLLQKGLALDKCQVTPPMAQKGQALWDLWKKTVVPDRHLEPVNIILVGKYVSLDDSYLSVHKALEHSAMRCNRKLNLVSVDSEHLEPEMQEKDPRKFHEAWAHVVRAQGIIVPGGFGTRGIQGMVDVAKWARERKLPYLGICLGMQTAVIEYARNVMGLKGATSEEFSATAEHRVVIFMPEGSKEQMGGTMRLGSRTSHFKPGTEWSKLRGLYGGVDVVEERHRHRYEVNPDYIEDLEKAGLSLTSMDDQGVRVETIELKDHPFFVGLQAHPEYKSKTLAPAPSLLGLVAASSGCLDEIIEAAHKKQSSSNGVSDVTNF</sequence>
<comment type="function">
    <text>Catalyzes the ATP-dependent amination of UTP to CTP with either L-glutamine or ammonia as the source of nitrogen.</text>
</comment>
<comment type="catalytic activity">
    <reaction>
        <text>UTP + L-glutamine + ATP + H2O = CTP + L-glutamate + ADP + phosphate + 2 H(+)</text>
        <dbReference type="Rhea" id="RHEA:26426"/>
        <dbReference type="ChEBI" id="CHEBI:15377"/>
        <dbReference type="ChEBI" id="CHEBI:15378"/>
        <dbReference type="ChEBI" id="CHEBI:29985"/>
        <dbReference type="ChEBI" id="CHEBI:30616"/>
        <dbReference type="ChEBI" id="CHEBI:37563"/>
        <dbReference type="ChEBI" id="CHEBI:43474"/>
        <dbReference type="ChEBI" id="CHEBI:46398"/>
        <dbReference type="ChEBI" id="CHEBI:58359"/>
        <dbReference type="ChEBI" id="CHEBI:456216"/>
        <dbReference type="EC" id="6.3.4.2"/>
    </reaction>
</comment>
<comment type="pathway">
    <text>Pyrimidine metabolism; CTP biosynthesis via de novo pathway; CTP from UDP: step 2/2.</text>
</comment>
<comment type="similarity">
    <text evidence="2">Belongs to the CTP synthase family.</text>
</comment>
<comment type="sequence caution" evidence="2">
    <conflict type="erroneous gene model prediction">
        <sequence resource="EMBL-CDS" id="CEF84284"/>
    </conflict>
</comment>
<comment type="sequence caution" evidence="2">
    <conflict type="erroneous gene model prediction">
        <sequence resource="EMBL-CDS" id="ESU14222"/>
    </conflict>
</comment>
<evidence type="ECO:0000255" key="1">
    <source>
        <dbReference type="PROSITE-ProRule" id="PRU00605"/>
    </source>
</evidence>
<evidence type="ECO:0000305" key="2"/>
<dbReference type="EC" id="6.3.4.2"/>
<dbReference type="EMBL" id="AB011417">
    <property type="protein sequence ID" value="BAA33767.1"/>
    <property type="molecule type" value="Genomic_DNA"/>
</dbReference>
<dbReference type="EMBL" id="DS231666">
    <property type="protein sequence ID" value="ESU14222.1"/>
    <property type="status" value="ALT_SEQ"/>
    <property type="molecule type" value="Genomic_DNA"/>
</dbReference>
<dbReference type="EMBL" id="HG970335">
    <property type="protein sequence ID" value="CEF84284.1"/>
    <property type="status" value="ALT_SEQ"/>
    <property type="molecule type" value="Genomic_DNA"/>
</dbReference>
<dbReference type="EMBL" id="AB009607">
    <property type="protein sequence ID" value="BAA29036.1"/>
    <property type="molecule type" value="Genomic_DNA"/>
</dbReference>
<dbReference type="PIR" id="JW0086">
    <property type="entry name" value="JW0086"/>
</dbReference>
<dbReference type="PIR" id="T43732">
    <property type="entry name" value="T43732"/>
</dbReference>
<dbReference type="RefSeq" id="XP_011327729.1">
    <property type="nucleotide sequence ID" value="XM_011329427.1"/>
</dbReference>
<dbReference type="SMR" id="O74638"/>
<dbReference type="FunCoup" id="O74638">
    <property type="interactions" value="937"/>
</dbReference>
<dbReference type="STRING" id="229533.O74638"/>
<dbReference type="GeneID" id="23554944"/>
<dbReference type="KEGG" id="fgr:FGSG_07897"/>
<dbReference type="eggNOG" id="KOG2387">
    <property type="taxonomic scope" value="Eukaryota"/>
</dbReference>
<dbReference type="HOGENOM" id="CLU_011675_5_0_1"/>
<dbReference type="InParanoid" id="O74638"/>
<dbReference type="OrthoDB" id="60927at110618"/>
<dbReference type="UniPathway" id="UPA00159">
    <property type="reaction ID" value="UER00277"/>
</dbReference>
<dbReference type="Proteomes" id="UP000070720">
    <property type="component" value="Chromosome 4"/>
</dbReference>
<dbReference type="GO" id="GO:0097268">
    <property type="term" value="C:cytoophidium"/>
    <property type="evidence" value="ECO:0007669"/>
    <property type="project" value="TreeGrafter"/>
</dbReference>
<dbReference type="GO" id="GO:0005737">
    <property type="term" value="C:cytoplasm"/>
    <property type="evidence" value="ECO:0007669"/>
    <property type="project" value="TreeGrafter"/>
</dbReference>
<dbReference type="GO" id="GO:0005524">
    <property type="term" value="F:ATP binding"/>
    <property type="evidence" value="ECO:0007669"/>
    <property type="project" value="UniProtKB-KW"/>
</dbReference>
<dbReference type="GO" id="GO:0003883">
    <property type="term" value="F:CTP synthase activity"/>
    <property type="evidence" value="ECO:0007669"/>
    <property type="project" value="UniProtKB-EC"/>
</dbReference>
<dbReference type="GO" id="GO:0042802">
    <property type="term" value="F:identical protein binding"/>
    <property type="evidence" value="ECO:0007669"/>
    <property type="project" value="TreeGrafter"/>
</dbReference>
<dbReference type="GO" id="GO:0044210">
    <property type="term" value="P:'de novo' CTP biosynthetic process"/>
    <property type="evidence" value="ECO:0007669"/>
    <property type="project" value="UniProtKB-UniPathway"/>
</dbReference>
<dbReference type="GO" id="GO:0019856">
    <property type="term" value="P:pyrimidine nucleobase biosynthetic process"/>
    <property type="evidence" value="ECO:0007669"/>
    <property type="project" value="TreeGrafter"/>
</dbReference>
<dbReference type="CDD" id="cd03113">
    <property type="entry name" value="CTPS_N"/>
    <property type="match status" value="1"/>
</dbReference>
<dbReference type="CDD" id="cd01746">
    <property type="entry name" value="GATase1_CTP_Synthase"/>
    <property type="match status" value="1"/>
</dbReference>
<dbReference type="FunFam" id="3.40.50.300:FF:000207">
    <property type="entry name" value="CTP synthase"/>
    <property type="match status" value="1"/>
</dbReference>
<dbReference type="FunFam" id="3.40.50.880:FF:000005">
    <property type="entry name" value="CTP synthase"/>
    <property type="match status" value="1"/>
</dbReference>
<dbReference type="Gene3D" id="3.40.50.880">
    <property type="match status" value="1"/>
</dbReference>
<dbReference type="Gene3D" id="3.40.50.300">
    <property type="entry name" value="P-loop containing nucleotide triphosphate hydrolases"/>
    <property type="match status" value="1"/>
</dbReference>
<dbReference type="InterPro" id="IPR029062">
    <property type="entry name" value="Class_I_gatase-like"/>
</dbReference>
<dbReference type="InterPro" id="IPR004468">
    <property type="entry name" value="CTP_synthase"/>
</dbReference>
<dbReference type="InterPro" id="IPR017456">
    <property type="entry name" value="CTP_synthase_N"/>
</dbReference>
<dbReference type="InterPro" id="IPR017926">
    <property type="entry name" value="GATASE"/>
</dbReference>
<dbReference type="InterPro" id="IPR033828">
    <property type="entry name" value="GATase1_CTP_Synthase"/>
</dbReference>
<dbReference type="InterPro" id="IPR027417">
    <property type="entry name" value="P-loop_NTPase"/>
</dbReference>
<dbReference type="NCBIfam" id="NF003792">
    <property type="entry name" value="PRK05380.1"/>
    <property type="match status" value="1"/>
</dbReference>
<dbReference type="NCBIfam" id="TIGR00337">
    <property type="entry name" value="PyrG"/>
    <property type="match status" value="1"/>
</dbReference>
<dbReference type="PANTHER" id="PTHR11550">
    <property type="entry name" value="CTP SYNTHASE"/>
    <property type="match status" value="1"/>
</dbReference>
<dbReference type="PANTHER" id="PTHR11550:SF0">
    <property type="entry name" value="CTP SYNTHASE-RELATED"/>
    <property type="match status" value="1"/>
</dbReference>
<dbReference type="Pfam" id="PF06418">
    <property type="entry name" value="CTP_synth_N"/>
    <property type="match status" value="1"/>
</dbReference>
<dbReference type="Pfam" id="PF00117">
    <property type="entry name" value="GATase"/>
    <property type="match status" value="1"/>
</dbReference>
<dbReference type="SUPFAM" id="SSF52317">
    <property type="entry name" value="Class I glutamine amidotransferase-like"/>
    <property type="match status" value="1"/>
</dbReference>
<dbReference type="SUPFAM" id="SSF52540">
    <property type="entry name" value="P-loop containing nucleoside triphosphate hydrolases"/>
    <property type="match status" value="1"/>
</dbReference>
<dbReference type="PROSITE" id="PS51273">
    <property type="entry name" value="GATASE_TYPE_1"/>
    <property type="match status" value="1"/>
</dbReference>
<protein>
    <recommendedName>
        <fullName>CTP synthase</fullName>
        <ecNumber>6.3.4.2</ecNumber>
    </recommendedName>
    <alternativeName>
        <fullName>CTP synthetase</fullName>
    </alternativeName>
    <alternativeName>
        <fullName>UTP--ammonia ligase</fullName>
    </alternativeName>
</protein>